<sequence length="704" mass="77599">MARTTPIARYRNIGISAHIDAGKTTTTERILFYTGVNHKIGEVHDGAATMDWMEQEQERGITITSAATTAFWSGMAKQYEPHRINIIDTPGHVDFTIEVERSMRVLDGAVMVYCAVGGVQPQSETVWRQANKYKVPRIAFVNKMDRMGANFLKVVGQIKTRLGANPVPLQLAIGAEEGFTGVVDLVKMKAINWNDADQGVTFEYEDIPADMQDLANEWHQNLIESAAEASEELMEKYLGGEELTEEEIKQALRQRVLNNEIILVTCGSAFKNKGVQAMLDAVIDYLPSPVDVPAINGILDDGKDTPAERHASDDEPFSALAFKIATDPFVGNLTFFRVYSGVVNSGDTVLNSVKTARERFGRIVQMHANKREEIKEVRAGDIAAAIGLKDVTTGDTLCDPENPIILERMEFPEPVISIAVEPKTKADQEKMGLALGRLAKEDPSFRVWTDEESNQTIIAGMGELHLDIIVDRMKREFNVEANVGKPQVAYREAIRAKVTDIEGKHAKQSGGRGQYGHVVIDMYPLEPGSNPKGYEFINDIKGGVIPGEYIPAVDKGIQEQLKSGPLAGYPVVDLGVRLHFGSYHDVDSSELAFKLAASIAFKEGFKKAKPVLLEPIMKVEVETPEENTGDVIGDLSRRRGMLKGQESEVTGVKIHAEVPLSEMFGYATQLRSLTKGRASYTMEFLKYDDAPNNVAQAVIEARGK</sequence>
<evidence type="ECO:0000250" key="1"/>
<evidence type="ECO:0000305" key="2"/>
<proteinExistence type="inferred from homology"/>
<dbReference type="EMBL" id="X64591">
    <property type="protein sequence ID" value="CAA45880.1"/>
    <property type="molecule type" value="Genomic_DNA"/>
</dbReference>
<dbReference type="EMBL" id="AE006468">
    <property type="protein sequence ID" value="AAL22309.1"/>
    <property type="molecule type" value="Genomic_DNA"/>
</dbReference>
<dbReference type="PIR" id="JC1424">
    <property type="entry name" value="JC1424"/>
</dbReference>
<dbReference type="RefSeq" id="NP_462350.1">
    <property type="nucleotide sequence ID" value="NC_003197.2"/>
</dbReference>
<dbReference type="RefSeq" id="WP_000124693.1">
    <property type="nucleotide sequence ID" value="NC_003197.2"/>
</dbReference>
<dbReference type="SMR" id="P0A1H3"/>
<dbReference type="STRING" id="99287.STM3446"/>
<dbReference type="PaxDb" id="99287-STM3446"/>
<dbReference type="GeneID" id="1254969"/>
<dbReference type="KEGG" id="stm:STM3446"/>
<dbReference type="PATRIC" id="fig|99287.12.peg.3643"/>
<dbReference type="HOGENOM" id="CLU_002794_4_1_6"/>
<dbReference type="OMA" id="GQFAKVQ"/>
<dbReference type="PhylomeDB" id="P0A1H3"/>
<dbReference type="BioCyc" id="SENT99287:STM3446-MONOMER"/>
<dbReference type="Proteomes" id="UP000001014">
    <property type="component" value="Chromosome"/>
</dbReference>
<dbReference type="GO" id="GO:0005829">
    <property type="term" value="C:cytosol"/>
    <property type="evidence" value="ECO:0000318"/>
    <property type="project" value="GO_Central"/>
</dbReference>
<dbReference type="GO" id="GO:0005525">
    <property type="term" value="F:GTP binding"/>
    <property type="evidence" value="ECO:0007669"/>
    <property type="project" value="UniProtKB-UniRule"/>
</dbReference>
<dbReference type="GO" id="GO:0003924">
    <property type="term" value="F:GTPase activity"/>
    <property type="evidence" value="ECO:0007669"/>
    <property type="project" value="InterPro"/>
</dbReference>
<dbReference type="GO" id="GO:0097216">
    <property type="term" value="F:guanosine tetraphosphate binding"/>
    <property type="evidence" value="ECO:0007669"/>
    <property type="project" value="UniProtKB-ARBA"/>
</dbReference>
<dbReference type="GO" id="GO:0003746">
    <property type="term" value="F:translation elongation factor activity"/>
    <property type="evidence" value="ECO:0007669"/>
    <property type="project" value="UniProtKB-UniRule"/>
</dbReference>
<dbReference type="GO" id="GO:0032790">
    <property type="term" value="P:ribosome disassembly"/>
    <property type="evidence" value="ECO:0000318"/>
    <property type="project" value="GO_Central"/>
</dbReference>
<dbReference type="CDD" id="cd01886">
    <property type="entry name" value="EF-G"/>
    <property type="match status" value="1"/>
</dbReference>
<dbReference type="CDD" id="cd16262">
    <property type="entry name" value="EFG_III"/>
    <property type="match status" value="1"/>
</dbReference>
<dbReference type="CDD" id="cd01434">
    <property type="entry name" value="EFG_mtEFG1_IV"/>
    <property type="match status" value="1"/>
</dbReference>
<dbReference type="CDD" id="cd03713">
    <property type="entry name" value="EFG_mtEFG_C"/>
    <property type="match status" value="1"/>
</dbReference>
<dbReference type="CDD" id="cd04088">
    <property type="entry name" value="EFG_mtEFG_II"/>
    <property type="match status" value="1"/>
</dbReference>
<dbReference type="FunFam" id="2.40.30.10:FF:000006">
    <property type="entry name" value="Elongation factor G"/>
    <property type="match status" value="1"/>
</dbReference>
<dbReference type="FunFam" id="3.30.230.10:FF:000003">
    <property type="entry name" value="Elongation factor G"/>
    <property type="match status" value="1"/>
</dbReference>
<dbReference type="FunFam" id="3.30.70.240:FF:000001">
    <property type="entry name" value="Elongation factor G"/>
    <property type="match status" value="1"/>
</dbReference>
<dbReference type="FunFam" id="3.30.70.870:FF:000001">
    <property type="entry name" value="Elongation factor G"/>
    <property type="match status" value="1"/>
</dbReference>
<dbReference type="FunFam" id="3.40.50.300:FF:000029">
    <property type="entry name" value="Elongation factor G"/>
    <property type="match status" value="1"/>
</dbReference>
<dbReference type="Gene3D" id="3.30.230.10">
    <property type="match status" value="1"/>
</dbReference>
<dbReference type="Gene3D" id="3.30.70.240">
    <property type="match status" value="1"/>
</dbReference>
<dbReference type="Gene3D" id="3.30.70.870">
    <property type="entry name" value="Elongation Factor G (Translational Gtpase), domain 3"/>
    <property type="match status" value="1"/>
</dbReference>
<dbReference type="Gene3D" id="3.40.50.300">
    <property type="entry name" value="P-loop containing nucleotide triphosphate hydrolases"/>
    <property type="match status" value="1"/>
</dbReference>
<dbReference type="Gene3D" id="2.40.30.10">
    <property type="entry name" value="Translation factors"/>
    <property type="match status" value="1"/>
</dbReference>
<dbReference type="HAMAP" id="MF_00054_B">
    <property type="entry name" value="EF_G_EF_2_B"/>
    <property type="match status" value="1"/>
</dbReference>
<dbReference type="InterPro" id="IPR041095">
    <property type="entry name" value="EFG_II"/>
</dbReference>
<dbReference type="InterPro" id="IPR009022">
    <property type="entry name" value="EFG_III"/>
</dbReference>
<dbReference type="InterPro" id="IPR035647">
    <property type="entry name" value="EFG_III/V"/>
</dbReference>
<dbReference type="InterPro" id="IPR047872">
    <property type="entry name" value="EFG_IV"/>
</dbReference>
<dbReference type="InterPro" id="IPR035649">
    <property type="entry name" value="EFG_V"/>
</dbReference>
<dbReference type="InterPro" id="IPR000640">
    <property type="entry name" value="EFG_V-like"/>
</dbReference>
<dbReference type="InterPro" id="IPR004161">
    <property type="entry name" value="EFTu-like_2"/>
</dbReference>
<dbReference type="InterPro" id="IPR031157">
    <property type="entry name" value="G_TR_CS"/>
</dbReference>
<dbReference type="InterPro" id="IPR027417">
    <property type="entry name" value="P-loop_NTPase"/>
</dbReference>
<dbReference type="InterPro" id="IPR020568">
    <property type="entry name" value="Ribosomal_Su5_D2-typ_SF"/>
</dbReference>
<dbReference type="InterPro" id="IPR014721">
    <property type="entry name" value="Ribsml_uS5_D2-typ_fold_subgr"/>
</dbReference>
<dbReference type="InterPro" id="IPR005225">
    <property type="entry name" value="Small_GTP-bd"/>
</dbReference>
<dbReference type="InterPro" id="IPR000795">
    <property type="entry name" value="T_Tr_GTP-bd_dom"/>
</dbReference>
<dbReference type="InterPro" id="IPR009000">
    <property type="entry name" value="Transl_B-barrel_sf"/>
</dbReference>
<dbReference type="InterPro" id="IPR004540">
    <property type="entry name" value="Transl_elong_EFG/EF2"/>
</dbReference>
<dbReference type="InterPro" id="IPR005517">
    <property type="entry name" value="Transl_elong_EFG/EF2_IV"/>
</dbReference>
<dbReference type="NCBIfam" id="TIGR00484">
    <property type="entry name" value="EF-G"/>
    <property type="match status" value="1"/>
</dbReference>
<dbReference type="NCBIfam" id="NF009381">
    <property type="entry name" value="PRK12740.1-5"/>
    <property type="match status" value="1"/>
</dbReference>
<dbReference type="NCBIfam" id="TIGR00231">
    <property type="entry name" value="small_GTP"/>
    <property type="match status" value="1"/>
</dbReference>
<dbReference type="PANTHER" id="PTHR43261:SF1">
    <property type="entry name" value="RIBOSOME-RELEASING FACTOR 2, MITOCHONDRIAL"/>
    <property type="match status" value="1"/>
</dbReference>
<dbReference type="PANTHER" id="PTHR43261">
    <property type="entry name" value="TRANSLATION ELONGATION FACTOR G-RELATED"/>
    <property type="match status" value="1"/>
</dbReference>
<dbReference type="Pfam" id="PF00679">
    <property type="entry name" value="EFG_C"/>
    <property type="match status" value="1"/>
</dbReference>
<dbReference type="Pfam" id="PF14492">
    <property type="entry name" value="EFG_III"/>
    <property type="match status" value="1"/>
</dbReference>
<dbReference type="Pfam" id="PF03764">
    <property type="entry name" value="EFG_IV"/>
    <property type="match status" value="1"/>
</dbReference>
<dbReference type="Pfam" id="PF00009">
    <property type="entry name" value="GTP_EFTU"/>
    <property type="match status" value="1"/>
</dbReference>
<dbReference type="Pfam" id="PF03144">
    <property type="entry name" value="GTP_EFTU_D2"/>
    <property type="match status" value="1"/>
</dbReference>
<dbReference type="PRINTS" id="PR00315">
    <property type="entry name" value="ELONGATNFCT"/>
</dbReference>
<dbReference type="SMART" id="SM00838">
    <property type="entry name" value="EFG_C"/>
    <property type="match status" value="1"/>
</dbReference>
<dbReference type="SMART" id="SM00889">
    <property type="entry name" value="EFG_IV"/>
    <property type="match status" value="1"/>
</dbReference>
<dbReference type="SUPFAM" id="SSF54980">
    <property type="entry name" value="EF-G C-terminal domain-like"/>
    <property type="match status" value="2"/>
</dbReference>
<dbReference type="SUPFAM" id="SSF52540">
    <property type="entry name" value="P-loop containing nucleoside triphosphate hydrolases"/>
    <property type="match status" value="1"/>
</dbReference>
<dbReference type="SUPFAM" id="SSF54211">
    <property type="entry name" value="Ribosomal protein S5 domain 2-like"/>
    <property type="match status" value="1"/>
</dbReference>
<dbReference type="SUPFAM" id="SSF50447">
    <property type="entry name" value="Translation proteins"/>
    <property type="match status" value="1"/>
</dbReference>
<dbReference type="PROSITE" id="PS00301">
    <property type="entry name" value="G_TR_1"/>
    <property type="match status" value="1"/>
</dbReference>
<dbReference type="PROSITE" id="PS51722">
    <property type="entry name" value="G_TR_2"/>
    <property type="match status" value="1"/>
</dbReference>
<protein>
    <recommendedName>
        <fullName>Elongation factor G</fullName>
        <shortName>EF-G</shortName>
    </recommendedName>
</protein>
<accession>P0A1H3</accession>
<accession>P26229</accession>
<organism>
    <name type="scientific">Salmonella typhimurium (strain LT2 / SGSC1412 / ATCC 700720)</name>
    <dbReference type="NCBI Taxonomy" id="99287"/>
    <lineage>
        <taxon>Bacteria</taxon>
        <taxon>Pseudomonadati</taxon>
        <taxon>Pseudomonadota</taxon>
        <taxon>Gammaproteobacteria</taxon>
        <taxon>Enterobacterales</taxon>
        <taxon>Enterobacteriaceae</taxon>
        <taxon>Salmonella</taxon>
    </lineage>
</organism>
<name>EFG_SALTY</name>
<gene>
    <name type="primary">fusA</name>
    <name type="ordered locus">STM3446</name>
</gene>
<keyword id="KW-0963">Cytoplasm</keyword>
<keyword id="KW-0251">Elongation factor</keyword>
<keyword id="KW-0342">GTP-binding</keyword>
<keyword id="KW-0547">Nucleotide-binding</keyword>
<keyword id="KW-0648">Protein biosynthesis</keyword>
<keyword id="KW-1185">Reference proteome</keyword>
<comment type="function">
    <text evidence="1">Catalyzes the GTP-dependent ribosomal translocation step during translation elongation. During this step, the ribosome changes from the pre-translocational (PRE) to the post-translocational (POST) state as the newly formed A-site-bound peptidyl-tRNA and P-site-bound deacylated tRNA move to the P and E sites, respectively. Catalyzes the coordinated movement of the two tRNA molecules, the mRNA and conformational changes in the ribosome (By similarity).</text>
</comment>
<comment type="subcellular location">
    <subcellularLocation>
        <location evidence="1">Cytoplasm</location>
    </subcellularLocation>
</comment>
<comment type="similarity">
    <text evidence="2">Belongs to the TRAFAC class translation factor GTPase superfamily. Classic translation factor GTPase family. EF-G/EF-2 subfamily.</text>
</comment>
<reference key="1">
    <citation type="journal article" date="1992" name="Gene">
        <title>Comparison of the complete sequence of the str operon in Salmonella typhimurium and Escherichia coli.</title>
        <authorList>
            <person name="Johanson U."/>
            <person name="Hughes D."/>
        </authorList>
    </citation>
    <scope>NUCLEOTIDE SEQUENCE [GENOMIC DNA]</scope>
    <source>
        <strain>LT2</strain>
    </source>
</reference>
<reference key="2">
    <citation type="journal article" date="2001" name="Nature">
        <title>Complete genome sequence of Salmonella enterica serovar Typhimurium LT2.</title>
        <authorList>
            <person name="McClelland M."/>
            <person name="Sanderson K.E."/>
            <person name="Spieth J."/>
            <person name="Clifton S.W."/>
            <person name="Latreille P."/>
            <person name="Courtney L."/>
            <person name="Porwollik S."/>
            <person name="Ali J."/>
            <person name="Dante M."/>
            <person name="Du F."/>
            <person name="Hou S."/>
            <person name="Layman D."/>
            <person name="Leonard S."/>
            <person name="Nguyen C."/>
            <person name="Scott K."/>
            <person name="Holmes A."/>
            <person name="Grewal N."/>
            <person name="Mulvaney E."/>
            <person name="Ryan E."/>
            <person name="Sun H."/>
            <person name="Florea L."/>
            <person name="Miller W."/>
            <person name="Stoneking T."/>
            <person name="Nhan M."/>
            <person name="Waterston R."/>
            <person name="Wilson R.K."/>
        </authorList>
    </citation>
    <scope>NUCLEOTIDE SEQUENCE [LARGE SCALE GENOMIC DNA]</scope>
    <source>
        <strain>LT2 / SGSC1412 / ATCC 700720</strain>
    </source>
</reference>
<feature type="initiator methionine" description="Removed" evidence="1">
    <location>
        <position position="1"/>
    </location>
</feature>
<feature type="chain" id="PRO_0000091208" description="Elongation factor G">
    <location>
        <begin position="2"/>
        <end position="704"/>
    </location>
</feature>
<feature type="domain" description="tr-type G">
    <location>
        <begin position="8"/>
        <end position="290"/>
    </location>
</feature>
<feature type="binding site" evidence="1">
    <location>
        <begin position="17"/>
        <end position="24"/>
    </location>
    <ligand>
        <name>GTP</name>
        <dbReference type="ChEBI" id="CHEBI:37565"/>
    </ligand>
</feature>
<feature type="binding site" evidence="1">
    <location>
        <begin position="88"/>
        <end position="92"/>
    </location>
    <ligand>
        <name>GTP</name>
        <dbReference type="ChEBI" id="CHEBI:37565"/>
    </ligand>
</feature>
<feature type="binding site" evidence="1">
    <location>
        <begin position="142"/>
        <end position="145"/>
    </location>
    <ligand>
        <name>GTP</name>
        <dbReference type="ChEBI" id="CHEBI:37565"/>
    </ligand>
</feature>